<dbReference type="EC" id="2.7.7.6" evidence="1"/>
<dbReference type="EMBL" id="CP001196">
    <property type="protein sequence ID" value="ACI92829.1"/>
    <property type="molecule type" value="Genomic_DNA"/>
</dbReference>
<dbReference type="EMBL" id="CP002826">
    <property type="protein sequence ID" value="AEI07006.1"/>
    <property type="molecule type" value="Genomic_DNA"/>
</dbReference>
<dbReference type="RefSeq" id="WP_012562858.1">
    <property type="nucleotide sequence ID" value="NC_015684.1"/>
</dbReference>
<dbReference type="SMR" id="B6JEY9"/>
<dbReference type="STRING" id="504832.OCA5_c23060"/>
<dbReference type="KEGG" id="oca:OCAR_5701"/>
<dbReference type="KEGG" id="ocg:OCA5_c23060"/>
<dbReference type="PATRIC" id="fig|504832.7.peg.2431"/>
<dbReference type="eggNOG" id="COG0202">
    <property type="taxonomic scope" value="Bacteria"/>
</dbReference>
<dbReference type="HOGENOM" id="CLU_053084_0_0_5"/>
<dbReference type="OrthoDB" id="9805706at2"/>
<dbReference type="Proteomes" id="UP000007730">
    <property type="component" value="Chromosome"/>
</dbReference>
<dbReference type="GO" id="GO:0005737">
    <property type="term" value="C:cytoplasm"/>
    <property type="evidence" value="ECO:0007669"/>
    <property type="project" value="UniProtKB-ARBA"/>
</dbReference>
<dbReference type="GO" id="GO:0000428">
    <property type="term" value="C:DNA-directed RNA polymerase complex"/>
    <property type="evidence" value="ECO:0007669"/>
    <property type="project" value="UniProtKB-KW"/>
</dbReference>
<dbReference type="GO" id="GO:0003677">
    <property type="term" value="F:DNA binding"/>
    <property type="evidence" value="ECO:0007669"/>
    <property type="project" value="UniProtKB-UniRule"/>
</dbReference>
<dbReference type="GO" id="GO:0003899">
    <property type="term" value="F:DNA-directed RNA polymerase activity"/>
    <property type="evidence" value="ECO:0007669"/>
    <property type="project" value="UniProtKB-UniRule"/>
</dbReference>
<dbReference type="GO" id="GO:0046983">
    <property type="term" value="F:protein dimerization activity"/>
    <property type="evidence" value="ECO:0007669"/>
    <property type="project" value="InterPro"/>
</dbReference>
<dbReference type="GO" id="GO:0006351">
    <property type="term" value="P:DNA-templated transcription"/>
    <property type="evidence" value="ECO:0007669"/>
    <property type="project" value="UniProtKB-UniRule"/>
</dbReference>
<dbReference type="CDD" id="cd06928">
    <property type="entry name" value="RNAP_alpha_NTD"/>
    <property type="match status" value="1"/>
</dbReference>
<dbReference type="FunFam" id="1.10.150.20:FF:000001">
    <property type="entry name" value="DNA-directed RNA polymerase subunit alpha"/>
    <property type="match status" value="1"/>
</dbReference>
<dbReference type="FunFam" id="2.170.120.12:FF:000001">
    <property type="entry name" value="DNA-directed RNA polymerase subunit alpha"/>
    <property type="match status" value="1"/>
</dbReference>
<dbReference type="Gene3D" id="1.10.150.20">
    <property type="entry name" value="5' to 3' exonuclease, C-terminal subdomain"/>
    <property type="match status" value="1"/>
</dbReference>
<dbReference type="Gene3D" id="2.170.120.12">
    <property type="entry name" value="DNA-directed RNA polymerase, insert domain"/>
    <property type="match status" value="1"/>
</dbReference>
<dbReference type="Gene3D" id="3.30.1360.10">
    <property type="entry name" value="RNA polymerase, RBP11-like subunit"/>
    <property type="match status" value="1"/>
</dbReference>
<dbReference type="HAMAP" id="MF_00059">
    <property type="entry name" value="RNApol_bact_RpoA"/>
    <property type="match status" value="1"/>
</dbReference>
<dbReference type="InterPro" id="IPR011262">
    <property type="entry name" value="DNA-dir_RNA_pol_insert"/>
</dbReference>
<dbReference type="InterPro" id="IPR011263">
    <property type="entry name" value="DNA-dir_RNA_pol_RpoA/D/Rpb3"/>
</dbReference>
<dbReference type="InterPro" id="IPR011773">
    <property type="entry name" value="DNA-dir_RpoA"/>
</dbReference>
<dbReference type="InterPro" id="IPR036603">
    <property type="entry name" value="RBP11-like"/>
</dbReference>
<dbReference type="InterPro" id="IPR011260">
    <property type="entry name" value="RNAP_asu_C"/>
</dbReference>
<dbReference type="InterPro" id="IPR036643">
    <property type="entry name" value="RNApol_insert_sf"/>
</dbReference>
<dbReference type="NCBIfam" id="NF003513">
    <property type="entry name" value="PRK05182.1-2"/>
    <property type="match status" value="1"/>
</dbReference>
<dbReference type="NCBIfam" id="NF003519">
    <property type="entry name" value="PRK05182.2-5"/>
    <property type="match status" value="1"/>
</dbReference>
<dbReference type="NCBIfam" id="TIGR02027">
    <property type="entry name" value="rpoA"/>
    <property type="match status" value="1"/>
</dbReference>
<dbReference type="Pfam" id="PF01000">
    <property type="entry name" value="RNA_pol_A_bac"/>
    <property type="match status" value="1"/>
</dbReference>
<dbReference type="Pfam" id="PF03118">
    <property type="entry name" value="RNA_pol_A_CTD"/>
    <property type="match status" value="1"/>
</dbReference>
<dbReference type="Pfam" id="PF01193">
    <property type="entry name" value="RNA_pol_L"/>
    <property type="match status" value="1"/>
</dbReference>
<dbReference type="SMART" id="SM00662">
    <property type="entry name" value="RPOLD"/>
    <property type="match status" value="1"/>
</dbReference>
<dbReference type="SUPFAM" id="SSF47789">
    <property type="entry name" value="C-terminal domain of RNA polymerase alpha subunit"/>
    <property type="match status" value="1"/>
</dbReference>
<dbReference type="SUPFAM" id="SSF56553">
    <property type="entry name" value="Insert subdomain of RNA polymerase alpha subunit"/>
    <property type="match status" value="1"/>
</dbReference>
<dbReference type="SUPFAM" id="SSF55257">
    <property type="entry name" value="RBP11-like subunits of RNA polymerase"/>
    <property type="match status" value="1"/>
</dbReference>
<comment type="function">
    <text evidence="1">DNA-dependent RNA polymerase catalyzes the transcription of DNA into RNA using the four ribonucleoside triphosphates as substrates.</text>
</comment>
<comment type="catalytic activity">
    <reaction evidence="1">
        <text>RNA(n) + a ribonucleoside 5'-triphosphate = RNA(n+1) + diphosphate</text>
        <dbReference type="Rhea" id="RHEA:21248"/>
        <dbReference type="Rhea" id="RHEA-COMP:14527"/>
        <dbReference type="Rhea" id="RHEA-COMP:17342"/>
        <dbReference type="ChEBI" id="CHEBI:33019"/>
        <dbReference type="ChEBI" id="CHEBI:61557"/>
        <dbReference type="ChEBI" id="CHEBI:140395"/>
        <dbReference type="EC" id="2.7.7.6"/>
    </reaction>
</comment>
<comment type="subunit">
    <text evidence="1">Homodimer. The RNAP catalytic core consists of 2 alpha, 1 beta, 1 beta' and 1 omega subunit. When a sigma factor is associated with the core the holoenzyme is formed, which can initiate transcription.</text>
</comment>
<comment type="domain">
    <text evidence="1">The N-terminal domain is essential for RNAP assembly and basal transcription, whereas the C-terminal domain is involved in interaction with transcriptional regulators and with upstream promoter elements.</text>
</comment>
<comment type="similarity">
    <text evidence="1">Belongs to the RNA polymerase alpha chain family.</text>
</comment>
<name>RPOA_AFIC5</name>
<organism>
    <name type="scientific">Afipia carboxidovorans (strain ATCC 49405 / DSM 1227 / KCTC 32145 / OM5)</name>
    <name type="common">Oligotropha carboxidovorans</name>
    <dbReference type="NCBI Taxonomy" id="504832"/>
    <lineage>
        <taxon>Bacteria</taxon>
        <taxon>Pseudomonadati</taxon>
        <taxon>Pseudomonadota</taxon>
        <taxon>Alphaproteobacteria</taxon>
        <taxon>Hyphomicrobiales</taxon>
        <taxon>Nitrobacteraceae</taxon>
        <taxon>Afipia</taxon>
    </lineage>
</organism>
<feature type="chain" id="PRO_1000091957" description="DNA-directed RNA polymerase subunit alpha">
    <location>
        <begin position="1"/>
        <end position="339"/>
    </location>
</feature>
<feature type="region of interest" description="Alpha N-terminal domain (alpha-NTD)" evidence="1">
    <location>
        <begin position="1"/>
        <end position="235"/>
    </location>
</feature>
<feature type="region of interest" description="Alpha C-terminal domain (alpha-CTD)" evidence="1">
    <location>
        <begin position="251"/>
        <end position="339"/>
    </location>
</feature>
<gene>
    <name evidence="1" type="primary">rpoA</name>
    <name type="ordered locus">OCAR_5701</name>
    <name type="ordered locus">OCA5_c23060</name>
</gene>
<reference key="1">
    <citation type="journal article" date="2008" name="J. Bacteriol.">
        <title>Genome sequence of the chemolithoautotrophic bacterium Oligotropha carboxidovorans OM5T.</title>
        <authorList>
            <person name="Paul D."/>
            <person name="Bridges S."/>
            <person name="Burgess S.C."/>
            <person name="Dandass Y."/>
            <person name="Lawrence M.L."/>
        </authorList>
    </citation>
    <scope>NUCLEOTIDE SEQUENCE [LARGE SCALE GENOMIC DNA]</scope>
    <source>
        <strain>ATCC 49405 / DSM 1227 / KCTC 32145 / OM5</strain>
    </source>
</reference>
<reference key="2">
    <citation type="journal article" date="2011" name="J. Bacteriol.">
        <title>Complete genome sequences of the chemolithoautotrophic Oligotropha carboxidovorans strains OM4 and OM5.</title>
        <authorList>
            <person name="Volland S."/>
            <person name="Rachinger M."/>
            <person name="Strittmatter A."/>
            <person name="Daniel R."/>
            <person name="Gottschalk G."/>
            <person name="Meyer O."/>
        </authorList>
    </citation>
    <scope>NUCLEOTIDE SEQUENCE [LARGE SCALE GENOMIC DNA]</scope>
    <source>
        <strain>ATCC 49405 / DSM 1227 / KCTC 32145 / OM5</strain>
    </source>
</reference>
<sequence>MTIQKNWQELIRPNKLQVTPGSDPSRFATLVAEPLERGFGQTLGNALRRVLLSSLQGAAVQSVHIDGVLHEFSSIAGVREDVTDIVLNIKDISIKMQGEGPKRMVIKKQGPGVVTAGDIQTVGDVVVLNPELQLCTLDDGAEIRMEFTVDTGKGYVAADRNRPEDAPIGLIPVDSLFSPVRKVSYKVENTREGQILDYDKLTLTIETNGAITPEDALAYSARILQDQLNVFVNFEEPRKEVVQEIIPDLAFNPAFLKKVDELELSVRSANCLKNDNIVYIGDLVQKSEAEMLRTPNFGRKSLNEIKEVLAQMGLHLGMEVPGWPPENIDELAKRFEDHY</sequence>
<keyword id="KW-0240">DNA-directed RNA polymerase</keyword>
<keyword id="KW-0548">Nucleotidyltransferase</keyword>
<keyword id="KW-1185">Reference proteome</keyword>
<keyword id="KW-0804">Transcription</keyword>
<keyword id="KW-0808">Transferase</keyword>
<protein>
    <recommendedName>
        <fullName evidence="1">DNA-directed RNA polymerase subunit alpha</fullName>
        <shortName evidence="1">RNAP subunit alpha</shortName>
        <ecNumber evidence="1">2.7.7.6</ecNumber>
    </recommendedName>
    <alternativeName>
        <fullName evidence="1">RNA polymerase subunit alpha</fullName>
    </alternativeName>
    <alternativeName>
        <fullName evidence="1">Transcriptase subunit alpha</fullName>
    </alternativeName>
</protein>
<evidence type="ECO:0000255" key="1">
    <source>
        <dbReference type="HAMAP-Rule" id="MF_00059"/>
    </source>
</evidence>
<proteinExistence type="inferred from homology"/>
<accession>B6JEY9</accession>
<accession>F8BYV5</accession>